<organism>
    <name type="scientific">Solanum tuberosum</name>
    <name type="common">Potato</name>
    <dbReference type="NCBI Taxonomy" id="4113"/>
    <lineage>
        <taxon>Eukaryota</taxon>
        <taxon>Viridiplantae</taxon>
        <taxon>Streptophyta</taxon>
        <taxon>Embryophyta</taxon>
        <taxon>Tracheophyta</taxon>
        <taxon>Spermatophyta</taxon>
        <taxon>Magnoliopsida</taxon>
        <taxon>eudicotyledons</taxon>
        <taxon>Gunneridae</taxon>
        <taxon>Pentapetalae</taxon>
        <taxon>asterids</taxon>
        <taxon>lamiids</taxon>
        <taxon>Solanales</taxon>
        <taxon>Solanaceae</taxon>
        <taxon>Solanoideae</taxon>
        <taxon>Solaneae</taxon>
        <taxon>Solanum</taxon>
    </lineage>
</organism>
<name>CPI5_SOLTU</name>
<comment type="function">
    <text>Inhibitor of cysteine proteases. May protect the plant by inhibiting proteases of invading organisms.</text>
</comment>
<comment type="subcellular location">
    <subcellularLocation>
        <location evidence="1">Vacuole</location>
    </subcellularLocation>
</comment>
<comment type="similarity">
    <text evidence="2">Belongs to the protease inhibitor I3 (leguminous Kunitz-type inhibitor) family.</text>
</comment>
<evidence type="ECO:0000250" key="1"/>
<evidence type="ECO:0000305" key="2"/>
<sequence>GAVYLYNIGNLQCPNAVLQHMSIPQFLGEGTPVVFVRKSESDYGDVVRVMTVVYIKFFVKTTKLCVDQTVWKVNDEQLVVTGGKVGNENDIFKIMKTDLVTPGGSKYVYKLLHCPSHLGCKNIAGNFKNGYPRLVTVDDDKDFIPFVFIKA</sequence>
<protein>
    <recommendedName>
        <fullName>Cysteine protease inhibitor 5</fullName>
    </recommendedName>
    <alternativeName>
        <fullName>PCPI-5</fullName>
        <shortName>Pcpi5</shortName>
    </alternativeName>
</protein>
<dbReference type="EMBL" id="U59276">
    <property type="protein sequence ID" value="AAB63102.1"/>
    <property type="molecule type" value="mRNA"/>
</dbReference>
<dbReference type="SMR" id="O24387"/>
<dbReference type="STRING" id="4113.O24387"/>
<dbReference type="MEROPS" id="I03.017"/>
<dbReference type="InParanoid" id="O24387"/>
<dbReference type="Proteomes" id="UP000011115">
    <property type="component" value="Unassembled WGS sequence"/>
</dbReference>
<dbReference type="ExpressionAtlas" id="O24387">
    <property type="expression patterns" value="differential"/>
</dbReference>
<dbReference type="GO" id="GO:0005773">
    <property type="term" value="C:vacuole"/>
    <property type="evidence" value="ECO:0007669"/>
    <property type="project" value="UniProtKB-SubCell"/>
</dbReference>
<dbReference type="GO" id="GO:0004869">
    <property type="term" value="F:cysteine-type endopeptidase inhibitor activity"/>
    <property type="evidence" value="ECO:0007669"/>
    <property type="project" value="UniProtKB-KW"/>
</dbReference>
<dbReference type="Gene3D" id="2.80.10.50">
    <property type="match status" value="1"/>
</dbReference>
<dbReference type="InterPro" id="IPR011065">
    <property type="entry name" value="Kunitz_inhibitor_STI-like_sf"/>
</dbReference>
<dbReference type="InterPro" id="IPR002160">
    <property type="entry name" value="Prot_inh_Kunz-lg"/>
</dbReference>
<dbReference type="PANTHER" id="PTHR33107:SF44">
    <property type="entry name" value="CYSTEINE PROTEASE INHIBITOR 1"/>
    <property type="match status" value="1"/>
</dbReference>
<dbReference type="PANTHER" id="PTHR33107">
    <property type="entry name" value="KUNITZ TRYPSIN INHIBITOR 2"/>
    <property type="match status" value="1"/>
</dbReference>
<dbReference type="Pfam" id="PF00197">
    <property type="entry name" value="Kunitz_legume"/>
    <property type="match status" value="1"/>
</dbReference>
<dbReference type="SMART" id="SM00452">
    <property type="entry name" value="STI"/>
    <property type="match status" value="1"/>
</dbReference>
<dbReference type="SUPFAM" id="SSF50386">
    <property type="entry name" value="STI-like"/>
    <property type="match status" value="1"/>
</dbReference>
<accession>O24387</accession>
<keyword id="KW-1015">Disulfide bond</keyword>
<keyword id="KW-0646">Protease inhibitor</keyword>
<keyword id="KW-1185">Reference proteome</keyword>
<keyword id="KW-0789">Thiol protease inhibitor</keyword>
<keyword id="KW-0926">Vacuole</keyword>
<reference key="1">
    <citation type="journal article" date="1997" name="Plant Mol. Biol.">
        <title>Potato cysteine proteinase inhibitor gene family: molecular cloning, characterisation and immunocytochemical localisation studies.</title>
        <authorList>
            <person name="Gruden K."/>
            <person name="Strukelj B."/>
            <person name="Ravnikar M."/>
            <person name="Poljsak-Prijatelj M."/>
            <person name="Mavric I."/>
            <person name="Brzin J."/>
            <person name="Pungercar J."/>
            <person name="Kregar I."/>
        </authorList>
    </citation>
    <scope>NUCLEOTIDE SEQUENCE [MRNA]</scope>
    <source>
        <strain>cv. Ulster Sceptre</strain>
        <tissue>Tuber</tissue>
    </source>
</reference>
<feature type="chain" id="PRO_0000083317" description="Cysteine protease inhibitor 5">
    <location>
        <begin position="1" status="less than"/>
        <end position="151"/>
    </location>
</feature>
<feature type="disulfide bond" evidence="1">
    <location>
        <begin position="13"/>
        <end position="65"/>
    </location>
</feature>
<feature type="disulfide bond" evidence="1">
    <location>
        <begin position="114"/>
        <end position="120"/>
    </location>
</feature>
<feature type="non-terminal residue">
    <location>
        <position position="1"/>
    </location>
</feature>
<proteinExistence type="evidence at transcript level"/>